<comment type="function">
    <text evidence="1">Alpha toxins bind voltage-independently at site-3 of sodium channels (Nav) and inhibit the inactivation of the activated channels, thereby blocking neuronal transmission.</text>
</comment>
<comment type="subcellular location">
    <subcellularLocation>
        <location evidence="1">Secreted</location>
    </subcellularLocation>
</comment>
<comment type="tissue specificity">
    <text>Expressed by the venom gland.</text>
</comment>
<comment type="domain">
    <text evidence="4">Has the structural arrangement of an alpha-helix connected to antiparallel beta-sheets by disulfide bonds (CS-alpha/beta).</text>
</comment>
<comment type="mass spectrometry">
    <text>very likely corresponds to the mass found for the peptide eluting at 35.93 minutes.</text>
</comment>
<comment type="similarity">
    <text evidence="4">Belongs to the long (4 C-C) scorpion toxin superfamily. Sodium channel inhibitor family. Alpha subfamily.</text>
</comment>
<feature type="signal peptide" evidence="1">
    <location>
        <begin position="1"/>
        <end position="19"/>
    </location>
</feature>
<feature type="chain" id="PRO_5000525372" description="Toxin TdNa8">
    <location>
        <begin position="20"/>
        <end position="82"/>
    </location>
</feature>
<feature type="domain" description="LCN-type CS-alpha/beta" evidence="2">
    <location>
        <begin position="21"/>
        <end position="81"/>
    </location>
</feature>
<feature type="modified residue" description="Proline amide" evidence="1">
    <location>
        <position position="82"/>
    </location>
</feature>
<feature type="disulfide bond" evidence="2">
    <location>
        <begin position="31"/>
        <end position="80"/>
    </location>
</feature>
<feature type="disulfide bond" evidence="2">
    <location>
        <begin position="35"/>
        <end position="56"/>
    </location>
</feature>
<feature type="disulfide bond" evidence="2">
    <location>
        <begin position="42"/>
        <end position="63"/>
    </location>
</feature>
<feature type="disulfide bond" evidence="2">
    <location>
        <begin position="46"/>
        <end position="65"/>
    </location>
</feature>
<evidence type="ECO:0000250" key="1"/>
<evidence type="ECO:0000255" key="2">
    <source>
        <dbReference type="PROSITE-ProRule" id="PRU01210"/>
    </source>
</evidence>
<evidence type="ECO:0000269" key="3">
    <source>
    </source>
</evidence>
<evidence type="ECO:0000305" key="4"/>
<sequence>MNYLTLIAAASLLTAGTESKKDGYPVKEGDCAFPCGYDNAYCDKLCKERKADSGYCYWGNILCYCYGLPDKAAIKGYGRCRPGKK</sequence>
<proteinExistence type="evidence at protein level"/>
<keyword id="KW-0027">Amidation</keyword>
<keyword id="KW-1015">Disulfide bond</keyword>
<keyword id="KW-0872">Ion channel impairing toxin</keyword>
<keyword id="KW-0528">Neurotoxin</keyword>
<keyword id="KW-0964">Secreted</keyword>
<keyword id="KW-0732">Signal</keyword>
<keyword id="KW-0800">Toxin</keyword>
<keyword id="KW-0738">Voltage-gated sodium channel impairing toxin</keyword>
<dbReference type="EMBL" id="FN392284">
    <property type="protein sequence ID" value="CAY61941.1"/>
    <property type="molecule type" value="mRNA"/>
</dbReference>
<dbReference type="SMR" id="C9X4K6"/>
<dbReference type="GO" id="GO:0005576">
    <property type="term" value="C:extracellular region"/>
    <property type="evidence" value="ECO:0007669"/>
    <property type="project" value="UniProtKB-SubCell"/>
</dbReference>
<dbReference type="GO" id="GO:0019871">
    <property type="term" value="F:sodium channel inhibitor activity"/>
    <property type="evidence" value="ECO:0007669"/>
    <property type="project" value="InterPro"/>
</dbReference>
<dbReference type="GO" id="GO:0090729">
    <property type="term" value="F:toxin activity"/>
    <property type="evidence" value="ECO:0007669"/>
    <property type="project" value="UniProtKB-KW"/>
</dbReference>
<dbReference type="GO" id="GO:0006952">
    <property type="term" value="P:defense response"/>
    <property type="evidence" value="ECO:0007669"/>
    <property type="project" value="InterPro"/>
</dbReference>
<dbReference type="CDD" id="cd23106">
    <property type="entry name" value="neurotoxins_LC_scorpion"/>
    <property type="match status" value="1"/>
</dbReference>
<dbReference type="Gene3D" id="3.30.30.10">
    <property type="entry name" value="Knottin, scorpion toxin-like"/>
    <property type="match status" value="1"/>
</dbReference>
<dbReference type="InterPro" id="IPR044062">
    <property type="entry name" value="LCN-type_CS_alpha_beta_dom"/>
</dbReference>
<dbReference type="InterPro" id="IPR003614">
    <property type="entry name" value="Scorpion_toxin-like"/>
</dbReference>
<dbReference type="InterPro" id="IPR036574">
    <property type="entry name" value="Scorpion_toxin-like_sf"/>
</dbReference>
<dbReference type="InterPro" id="IPR018218">
    <property type="entry name" value="Scorpion_toxinL"/>
</dbReference>
<dbReference type="InterPro" id="IPR002061">
    <property type="entry name" value="Scorpion_toxinL/defensin"/>
</dbReference>
<dbReference type="Pfam" id="PF00537">
    <property type="entry name" value="Toxin_3"/>
    <property type="match status" value="1"/>
</dbReference>
<dbReference type="PRINTS" id="PR00285">
    <property type="entry name" value="SCORPNTOXIN"/>
</dbReference>
<dbReference type="SMART" id="SM00505">
    <property type="entry name" value="Knot1"/>
    <property type="match status" value="1"/>
</dbReference>
<dbReference type="SUPFAM" id="SSF57095">
    <property type="entry name" value="Scorpion toxin-like"/>
    <property type="match status" value="1"/>
</dbReference>
<dbReference type="PROSITE" id="PS51863">
    <property type="entry name" value="LCN_CSAB"/>
    <property type="match status" value="1"/>
</dbReference>
<name>SCNA8_TITDI</name>
<organism>
    <name type="scientific">Tityus discrepans</name>
    <name type="common">Venezuelan scorpion</name>
    <dbReference type="NCBI Taxonomy" id="57059"/>
    <lineage>
        <taxon>Eukaryota</taxon>
        <taxon>Metazoa</taxon>
        <taxon>Ecdysozoa</taxon>
        <taxon>Arthropoda</taxon>
        <taxon>Chelicerata</taxon>
        <taxon>Arachnida</taxon>
        <taxon>Scorpiones</taxon>
        <taxon>Buthida</taxon>
        <taxon>Buthoidea</taxon>
        <taxon>Buthidae</taxon>
        <taxon>Tityus</taxon>
    </lineage>
</organism>
<protein>
    <recommendedName>
        <fullName>Toxin TdNa8</fullName>
    </recommendedName>
    <alternativeName>
        <fullName>P*T-alpha* NaTx3.6</fullName>
    </alternativeName>
</protein>
<accession>C9X4K6</accession>
<reference key="1">
    <citation type="journal article" date="2009" name="Biochimie">
        <title>Molecular cloning and nucleotide sequence analysis of genes from a cDNA library of the scorpion Tityus discrepans.</title>
        <authorList>
            <person name="D'Suze G."/>
            <person name="Schwartz E.F."/>
            <person name="Garcia-Gomez B.I."/>
            <person name="Sevcik C."/>
            <person name="Possani L.D."/>
        </authorList>
    </citation>
    <scope>NUCLEOTIDE SEQUENCE [MRNA]</scope>
    <source>
        <tissue>Venom gland</tissue>
    </source>
</reference>
<reference key="2">
    <citation type="journal article" date="2006" name="Proteomics">
        <title>Proteomic analysis of Tityus discrepans scorpion venom and amino acid sequence of novel toxins.</title>
        <authorList>
            <person name="Batista C.V.F."/>
            <person name="D'Suze G."/>
            <person name="Gomez-Lagunas F."/>
            <person name="Zamudio F.Z."/>
            <person name="Encarnacion S."/>
            <person name="Sevcik C."/>
            <person name="Possani L.D."/>
        </authorList>
    </citation>
    <scope>MASS SPECTROMETRY</scope>
</reference>
<reference key="3">
    <citation type="journal article" date="2012" name="PLoS ONE">
        <title>Identification and phylogenetic analysis of Tityus pachyurus and Tityus obscurus novel putative Na+-channel scorpion toxins.</title>
        <authorList>
            <person name="Guerrero-Vargas J.A."/>
            <person name="Mourao C.B."/>
            <person name="Quintero-Hernandez V."/>
            <person name="Possani L.D."/>
            <person name="Schwartz E.F."/>
        </authorList>
    </citation>
    <scope>NOMENCLATURE</scope>
</reference>